<gene>
    <name evidence="1" type="primary">glk</name>
    <name type="ordered locus">HPP12_1068</name>
</gene>
<comment type="catalytic activity">
    <reaction evidence="1">
        <text>D-glucose + ATP = D-glucose 6-phosphate + ADP + H(+)</text>
        <dbReference type="Rhea" id="RHEA:17825"/>
        <dbReference type="ChEBI" id="CHEBI:4167"/>
        <dbReference type="ChEBI" id="CHEBI:15378"/>
        <dbReference type="ChEBI" id="CHEBI:30616"/>
        <dbReference type="ChEBI" id="CHEBI:61548"/>
        <dbReference type="ChEBI" id="CHEBI:456216"/>
        <dbReference type="EC" id="2.7.1.2"/>
    </reaction>
</comment>
<comment type="subcellular location">
    <subcellularLocation>
        <location evidence="1">Cytoplasm</location>
    </subcellularLocation>
</comment>
<comment type="similarity">
    <text evidence="1">Belongs to the bacterial glucokinase family.</text>
</comment>
<dbReference type="EC" id="2.7.1.2" evidence="1"/>
<dbReference type="EMBL" id="CP001217">
    <property type="protein sequence ID" value="ACJ08220.1"/>
    <property type="molecule type" value="Genomic_DNA"/>
</dbReference>
<dbReference type="SMR" id="B6JMU2"/>
<dbReference type="KEGG" id="hpp:HPP12_1068"/>
<dbReference type="HOGENOM" id="CLU_042582_1_0_7"/>
<dbReference type="Proteomes" id="UP000008198">
    <property type="component" value="Chromosome"/>
</dbReference>
<dbReference type="GO" id="GO:0005829">
    <property type="term" value="C:cytosol"/>
    <property type="evidence" value="ECO:0007669"/>
    <property type="project" value="TreeGrafter"/>
</dbReference>
<dbReference type="GO" id="GO:0005524">
    <property type="term" value="F:ATP binding"/>
    <property type="evidence" value="ECO:0007669"/>
    <property type="project" value="UniProtKB-UniRule"/>
</dbReference>
<dbReference type="GO" id="GO:0005536">
    <property type="term" value="F:D-glucose binding"/>
    <property type="evidence" value="ECO:0007669"/>
    <property type="project" value="InterPro"/>
</dbReference>
<dbReference type="GO" id="GO:0004340">
    <property type="term" value="F:glucokinase activity"/>
    <property type="evidence" value="ECO:0007669"/>
    <property type="project" value="UniProtKB-UniRule"/>
</dbReference>
<dbReference type="GO" id="GO:0006096">
    <property type="term" value="P:glycolytic process"/>
    <property type="evidence" value="ECO:0007669"/>
    <property type="project" value="UniProtKB-UniRule"/>
</dbReference>
<dbReference type="CDD" id="cd24008">
    <property type="entry name" value="ASKHA_NBD_GLK"/>
    <property type="match status" value="1"/>
</dbReference>
<dbReference type="FunFam" id="3.40.367.20:FF:000002">
    <property type="entry name" value="Glucokinase"/>
    <property type="match status" value="1"/>
</dbReference>
<dbReference type="Gene3D" id="3.30.420.40">
    <property type="match status" value="1"/>
</dbReference>
<dbReference type="Gene3D" id="3.40.367.20">
    <property type="match status" value="1"/>
</dbReference>
<dbReference type="HAMAP" id="MF_00524">
    <property type="entry name" value="Glucokinase"/>
    <property type="match status" value="1"/>
</dbReference>
<dbReference type="InterPro" id="IPR043129">
    <property type="entry name" value="ATPase_NBD"/>
</dbReference>
<dbReference type="InterPro" id="IPR050201">
    <property type="entry name" value="Bacterial_glucokinase"/>
</dbReference>
<dbReference type="InterPro" id="IPR003836">
    <property type="entry name" value="Glucokinase"/>
</dbReference>
<dbReference type="NCBIfam" id="TIGR00749">
    <property type="entry name" value="glk"/>
    <property type="match status" value="1"/>
</dbReference>
<dbReference type="NCBIfam" id="NF001416">
    <property type="entry name" value="PRK00292.1-3"/>
    <property type="match status" value="1"/>
</dbReference>
<dbReference type="PANTHER" id="PTHR47690">
    <property type="entry name" value="GLUCOKINASE"/>
    <property type="match status" value="1"/>
</dbReference>
<dbReference type="PANTHER" id="PTHR47690:SF1">
    <property type="entry name" value="GLUCOKINASE"/>
    <property type="match status" value="1"/>
</dbReference>
<dbReference type="Pfam" id="PF02685">
    <property type="entry name" value="Glucokinase"/>
    <property type="match status" value="1"/>
</dbReference>
<dbReference type="SUPFAM" id="SSF53067">
    <property type="entry name" value="Actin-like ATPase domain"/>
    <property type="match status" value="1"/>
</dbReference>
<reference key="1">
    <citation type="submission" date="2008-10" db="EMBL/GenBank/DDBJ databases">
        <title>The complete genome sequence of Helicobacter pylori strain P12.</title>
        <authorList>
            <person name="Fischer W."/>
            <person name="Windhager L."/>
            <person name="Karnholz A."/>
            <person name="Zeiller M."/>
            <person name="Zimmer R."/>
            <person name="Haas R."/>
        </authorList>
    </citation>
    <scope>NUCLEOTIDE SEQUENCE [LARGE SCALE GENOMIC DNA]</scope>
    <source>
        <strain>P12</strain>
    </source>
</reference>
<sequence>MPKTETYPRLLADIGGTNARFGLEVAPRQIECIEVLRCEDFESLSDAVRFYLSKCKESLKLHPIYGSFAVATPIMGDFVQMTNNHWTFSIETTRQCLTLKKLLVINDFVAQAYAISAMQENDLAQIGGIKCEINAPKAILGPGTGLGVSTLIQNSDGSLKVLPGEGGHVSFAPFDDLEILVWQYARSKFNHVSAERFLSGSGLVLIYEALSKRKGLEKVAKLSKAELTPQIISERALNGDYPICRLTLDTFCSMLGTLAADVALTLGARGGVYLCGGIIPRFIDYFKTSPFRARFETKGRMGAFLASIPVHVVMKKTPGLDGAGIALENYLLHDKI</sequence>
<evidence type="ECO:0000255" key="1">
    <source>
        <dbReference type="HAMAP-Rule" id="MF_00524"/>
    </source>
</evidence>
<keyword id="KW-0067">ATP-binding</keyword>
<keyword id="KW-0963">Cytoplasm</keyword>
<keyword id="KW-0324">Glycolysis</keyword>
<keyword id="KW-0418">Kinase</keyword>
<keyword id="KW-0547">Nucleotide-binding</keyword>
<keyword id="KW-0808">Transferase</keyword>
<organism>
    <name type="scientific">Helicobacter pylori (strain P12)</name>
    <dbReference type="NCBI Taxonomy" id="570508"/>
    <lineage>
        <taxon>Bacteria</taxon>
        <taxon>Pseudomonadati</taxon>
        <taxon>Campylobacterota</taxon>
        <taxon>Epsilonproteobacteria</taxon>
        <taxon>Campylobacterales</taxon>
        <taxon>Helicobacteraceae</taxon>
        <taxon>Helicobacter</taxon>
    </lineage>
</organism>
<proteinExistence type="inferred from homology"/>
<name>GLK_HELP2</name>
<protein>
    <recommendedName>
        <fullName evidence="1">Glucokinase</fullName>
        <ecNumber evidence="1">2.7.1.2</ecNumber>
    </recommendedName>
    <alternativeName>
        <fullName evidence="1">Glucose kinase</fullName>
    </alternativeName>
</protein>
<feature type="chain" id="PRO_1000127709" description="Glucokinase">
    <location>
        <begin position="1"/>
        <end position="336"/>
    </location>
</feature>
<feature type="binding site" evidence="1">
    <location>
        <begin position="12"/>
        <end position="17"/>
    </location>
    <ligand>
        <name>ATP</name>
        <dbReference type="ChEBI" id="CHEBI:30616"/>
    </ligand>
</feature>
<accession>B6JMU2</accession>